<comment type="function">
    <text evidence="1">Involved in a peptide intake transport system that plays a role in the resistance to antimicrobial peptides.</text>
</comment>
<comment type="subcellular location">
    <subcellularLocation>
        <location evidence="3">Cell inner membrane</location>
        <topology evidence="3">Peripheral membrane protein</topology>
    </subcellularLocation>
</comment>
<comment type="similarity">
    <text evidence="3">Belongs to the ABC transporter superfamily.</text>
</comment>
<proteinExistence type="inferred from homology"/>
<feature type="chain" id="PRO_0000092967" description="Peptide transport system ATP-binding protein SapD">
    <location>
        <begin position="1"/>
        <end position="349"/>
    </location>
</feature>
<feature type="domain" description="ABC transporter" evidence="2">
    <location>
        <begin position="1"/>
        <end position="259"/>
    </location>
</feature>
<feature type="binding site" evidence="2">
    <location>
        <begin position="40"/>
        <end position="47"/>
    </location>
    <ligand>
        <name>ATP</name>
        <dbReference type="ChEBI" id="CHEBI:30616"/>
    </ligand>
</feature>
<keyword id="KW-0067">ATP-binding</keyword>
<keyword id="KW-0997">Cell inner membrane</keyword>
<keyword id="KW-1003">Cell membrane</keyword>
<keyword id="KW-0472">Membrane</keyword>
<keyword id="KW-0547">Nucleotide-binding</keyword>
<keyword id="KW-0571">Peptide transport</keyword>
<keyword id="KW-0653">Protein transport</keyword>
<keyword id="KW-1185">Reference proteome</keyword>
<keyword id="KW-0813">Transport</keyword>
<name>SAPD_HAEIN</name>
<dbReference type="EMBL" id="L42023">
    <property type="protein sequence ID" value="AAC23288.1"/>
    <property type="molecule type" value="Genomic_DNA"/>
</dbReference>
<dbReference type="PIR" id="D64134">
    <property type="entry name" value="D64134"/>
</dbReference>
<dbReference type="RefSeq" id="NP_439783.1">
    <property type="nucleotide sequence ID" value="NC_000907.1"/>
</dbReference>
<dbReference type="SMR" id="P45288"/>
<dbReference type="STRING" id="71421.HI_1641"/>
<dbReference type="EnsemblBacteria" id="AAC23288">
    <property type="protein sequence ID" value="AAC23288"/>
    <property type="gene ID" value="HI_1641"/>
</dbReference>
<dbReference type="KEGG" id="hin:HI_1641"/>
<dbReference type="PATRIC" id="fig|71421.8.peg.1717"/>
<dbReference type="eggNOG" id="COG4172">
    <property type="taxonomic scope" value="Bacteria"/>
</dbReference>
<dbReference type="HOGENOM" id="CLU_000604_1_23_6"/>
<dbReference type="OrthoDB" id="9784450at2"/>
<dbReference type="PhylomeDB" id="P45288"/>
<dbReference type="BioCyc" id="HINF71421:G1GJ1-1658-MONOMER"/>
<dbReference type="Proteomes" id="UP000000579">
    <property type="component" value="Chromosome"/>
</dbReference>
<dbReference type="GO" id="GO:0005886">
    <property type="term" value="C:plasma membrane"/>
    <property type="evidence" value="ECO:0007669"/>
    <property type="project" value="UniProtKB-SubCell"/>
</dbReference>
<dbReference type="GO" id="GO:0005524">
    <property type="term" value="F:ATP binding"/>
    <property type="evidence" value="ECO:0007669"/>
    <property type="project" value="UniProtKB-KW"/>
</dbReference>
<dbReference type="GO" id="GO:0016887">
    <property type="term" value="F:ATP hydrolysis activity"/>
    <property type="evidence" value="ECO:0007669"/>
    <property type="project" value="InterPro"/>
</dbReference>
<dbReference type="GO" id="GO:0015833">
    <property type="term" value="P:peptide transport"/>
    <property type="evidence" value="ECO:0007669"/>
    <property type="project" value="UniProtKB-KW"/>
</dbReference>
<dbReference type="GO" id="GO:0015031">
    <property type="term" value="P:protein transport"/>
    <property type="evidence" value="ECO:0007669"/>
    <property type="project" value="UniProtKB-KW"/>
</dbReference>
<dbReference type="CDD" id="cd03257">
    <property type="entry name" value="ABC_NikE_OppD_transporters"/>
    <property type="match status" value="1"/>
</dbReference>
<dbReference type="Gene3D" id="3.40.50.300">
    <property type="entry name" value="P-loop containing nucleotide triphosphate hydrolases"/>
    <property type="match status" value="1"/>
</dbReference>
<dbReference type="InterPro" id="IPR003593">
    <property type="entry name" value="AAA+_ATPase"/>
</dbReference>
<dbReference type="InterPro" id="IPR050388">
    <property type="entry name" value="ABC_Ni/Peptide_Import"/>
</dbReference>
<dbReference type="InterPro" id="IPR003439">
    <property type="entry name" value="ABC_transporter-like_ATP-bd"/>
</dbReference>
<dbReference type="InterPro" id="IPR013563">
    <property type="entry name" value="Oligopep_ABC_C"/>
</dbReference>
<dbReference type="InterPro" id="IPR027417">
    <property type="entry name" value="P-loop_NTPase"/>
</dbReference>
<dbReference type="NCBIfam" id="TIGR01727">
    <property type="entry name" value="oligo_HPY"/>
    <property type="match status" value="1"/>
</dbReference>
<dbReference type="PANTHER" id="PTHR43297">
    <property type="entry name" value="OLIGOPEPTIDE TRANSPORT ATP-BINDING PROTEIN APPD"/>
    <property type="match status" value="1"/>
</dbReference>
<dbReference type="PANTHER" id="PTHR43297:SF4">
    <property type="entry name" value="PUTRESCINE EXPORT SYSTEM ATP-BINDING PROTEIN SAPD"/>
    <property type="match status" value="1"/>
</dbReference>
<dbReference type="Pfam" id="PF00005">
    <property type="entry name" value="ABC_tran"/>
    <property type="match status" value="1"/>
</dbReference>
<dbReference type="Pfam" id="PF08352">
    <property type="entry name" value="oligo_HPY"/>
    <property type="match status" value="1"/>
</dbReference>
<dbReference type="SMART" id="SM00382">
    <property type="entry name" value="AAA"/>
    <property type="match status" value="1"/>
</dbReference>
<dbReference type="SUPFAM" id="SSF52540">
    <property type="entry name" value="P-loop containing nucleoside triphosphate hydrolases"/>
    <property type="match status" value="1"/>
</dbReference>
<dbReference type="PROSITE" id="PS50893">
    <property type="entry name" value="ABC_TRANSPORTER_2"/>
    <property type="match status" value="1"/>
</dbReference>
<gene>
    <name type="primary">sapD</name>
    <name type="ordered locus">HI_1641</name>
</gene>
<sequence>MALLDICNLNIEIQTSNGRIKIVDGVNLSLNEGEISGLVGESGSGKSLIAKVICNAIKENWIITADRFRFHDVELLKLSPNKRRKLVGKEISMIFQNPLSCLDPSRKIGKQLIQNIPNWTFKNKWWKWFGWKKRRAIELLHRVGIKDHRDIMASYPNELTEGEGQKVMIAMAVANQPRLLIADEPTNALESTTALQVFRLLSSMNQNQGTTILLTSNDIKSISEWCDQISVLYCGQNTESAPTEILIESPHHPYTQALINAVPDFTQPLGFKTKLGTLEGTAPILEQMPIGCRLGPRCPFAQKKCMEKPRRLKIKQHEFSCHYPINLREKNFKEKTTATPFILNCKGNE</sequence>
<protein>
    <recommendedName>
        <fullName>Peptide transport system ATP-binding protein SapD</fullName>
    </recommendedName>
</protein>
<reference key="1">
    <citation type="journal article" date="1995" name="Science">
        <title>Whole-genome random sequencing and assembly of Haemophilus influenzae Rd.</title>
        <authorList>
            <person name="Fleischmann R.D."/>
            <person name="Adams M.D."/>
            <person name="White O."/>
            <person name="Clayton R.A."/>
            <person name="Kirkness E.F."/>
            <person name="Kerlavage A.R."/>
            <person name="Bult C.J."/>
            <person name="Tomb J.-F."/>
            <person name="Dougherty B.A."/>
            <person name="Merrick J.M."/>
            <person name="McKenney K."/>
            <person name="Sutton G.G."/>
            <person name="FitzHugh W."/>
            <person name="Fields C.A."/>
            <person name="Gocayne J.D."/>
            <person name="Scott J.D."/>
            <person name="Shirley R."/>
            <person name="Liu L.-I."/>
            <person name="Glodek A."/>
            <person name="Kelley J.M."/>
            <person name="Weidman J.F."/>
            <person name="Phillips C.A."/>
            <person name="Spriggs T."/>
            <person name="Hedblom E."/>
            <person name="Cotton M.D."/>
            <person name="Utterback T.R."/>
            <person name="Hanna M.C."/>
            <person name="Nguyen D.T."/>
            <person name="Saudek D.M."/>
            <person name="Brandon R.C."/>
            <person name="Fine L.D."/>
            <person name="Fritchman J.L."/>
            <person name="Fuhrmann J.L."/>
            <person name="Geoghagen N.S.M."/>
            <person name="Gnehm C.L."/>
            <person name="McDonald L.A."/>
            <person name="Small K.V."/>
            <person name="Fraser C.M."/>
            <person name="Smith H.O."/>
            <person name="Venter J.C."/>
        </authorList>
    </citation>
    <scope>NUCLEOTIDE SEQUENCE [LARGE SCALE GENOMIC DNA]</scope>
    <source>
        <strain>ATCC 51907 / DSM 11121 / KW20 / Rd</strain>
    </source>
</reference>
<evidence type="ECO:0000250" key="1"/>
<evidence type="ECO:0000255" key="2">
    <source>
        <dbReference type="PROSITE-ProRule" id="PRU00434"/>
    </source>
</evidence>
<evidence type="ECO:0000305" key="3"/>
<accession>P45288</accession>
<organism>
    <name type="scientific">Haemophilus influenzae (strain ATCC 51907 / DSM 11121 / KW20 / Rd)</name>
    <dbReference type="NCBI Taxonomy" id="71421"/>
    <lineage>
        <taxon>Bacteria</taxon>
        <taxon>Pseudomonadati</taxon>
        <taxon>Pseudomonadota</taxon>
        <taxon>Gammaproteobacteria</taxon>
        <taxon>Pasteurellales</taxon>
        <taxon>Pasteurellaceae</taxon>
        <taxon>Haemophilus</taxon>
    </lineage>
</organism>